<protein>
    <recommendedName>
        <fullName evidence="1">Septation ring formation regulator EzrA</fullName>
    </recommendedName>
</protein>
<keyword id="KW-0131">Cell cycle</keyword>
<keyword id="KW-0132">Cell division</keyword>
<keyword id="KW-1003">Cell membrane</keyword>
<keyword id="KW-0175">Coiled coil</keyword>
<keyword id="KW-0472">Membrane</keyword>
<keyword id="KW-1185">Reference proteome</keyword>
<keyword id="KW-0717">Septation</keyword>
<keyword id="KW-0812">Transmembrane</keyword>
<keyword id="KW-1133">Transmembrane helix</keyword>
<dbReference type="EMBL" id="CP000029">
    <property type="protein sequence ID" value="AAW54684.1"/>
    <property type="molecule type" value="Genomic_DNA"/>
</dbReference>
<dbReference type="RefSeq" id="WP_002468056.1">
    <property type="nucleotide sequence ID" value="NC_002976.3"/>
</dbReference>
<dbReference type="SMR" id="Q5HNI8"/>
<dbReference type="STRING" id="176279.SERP1281"/>
<dbReference type="GeneID" id="50018494"/>
<dbReference type="KEGG" id="ser:SERP1281"/>
<dbReference type="eggNOG" id="COG4477">
    <property type="taxonomic scope" value="Bacteria"/>
</dbReference>
<dbReference type="HOGENOM" id="CLU_034079_1_0_9"/>
<dbReference type="Proteomes" id="UP000000531">
    <property type="component" value="Chromosome"/>
</dbReference>
<dbReference type="GO" id="GO:0005886">
    <property type="term" value="C:plasma membrane"/>
    <property type="evidence" value="ECO:0007669"/>
    <property type="project" value="UniProtKB-SubCell"/>
</dbReference>
<dbReference type="GO" id="GO:0005940">
    <property type="term" value="C:septin ring"/>
    <property type="evidence" value="ECO:0007669"/>
    <property type="project" value="InterPro"/>
</dbReference>
<dbReference type="GO" id="GO:0000917">
    <property type="term" value="P:division septum assembly"/>
    <property type="evidence" value="ECO:0007669"/>
    <property type="project" value="UniProtKB-KW"/>
</dbReference>
<dbReference type="GO" id="GO:0000921">
    <property type="term" value="P:septin ring assembly"/>
    <property type="evidence" value="ECO:0007669"/>
    <property type="project" value="InterPro"/>
</dbReference>
<dbReference type="HAMAP" id="MF_00728">
    <property type="entry name" value="EzrA"/>
    <property type="match status" value="1"/>
</dbReference>
<dbReference type="InterPro" id="IPR010379">
    <property type="entry name" value="EzrA"/>
</dbReference>
<dbReference type="NCBIfam" id="NF003412">
    <property type="entry name" value="PRK04778.1-6"/>
    <property type="match status" value="1"/>
</dbReference>
<dbReference type="Pfam" id="PF06160">
    <property type="entry name" value="EzrA"/>
    <property type="match status" value="1"/>
</dbReference>
<sequence length="564" mass="66457">MVLFIILAILVVILIAIGVLFYMRSNKRNLIEKTEERKNEIEQLPLDDNLRKLTGLNLKGETKTKYDAMKKDNTETTNKYLAPVEEKIQNAEELLEKFKFTAAQTEIDDAHELMDQYEENYQHQVTQVDDIINLHKENEALYEKCKVDYREMKRDVLANRHQFGEAAEPLENEIENYEPKLNEYENLKSEGNYVQAHNHIAALEDQIKNLKSYMDEIPELIRETQKELPGQFQDLKYGCRDLKVEGYDLDHVKVDGTIQSLKTELSFVEPMISRLELDEANNKLENINDKLDEMYDLIEYEVKAKNEVEETKDIITDDLFKAKDMNYTLQTEIEYVRENYYINESDAQSVRQFENEIQSLISVYDDILKETSKSAVRYSEVQDNLQYLEDHVSVINKEQDKLQNHLIQLREDEAEAEDNLLRVQSKKEEVYRRLLASNLTSVPERFIIMKNEIDNEVREVNEQFSERPIHVKQLKDKVAKIVIQMNTFEDEANDVLVNAVYAEKLIQYGNRYRKDHHHVDKSLNEAERLFKNNRYKRAIEIAEEALESVEPGITKHIEEQVIKE</sequence>
<reference key="1">
    <citation type="journal article" date="2005" name="J. Bacteriol.">
        <title>Insights on evolution of virulence and resistance from the complete genome analysis of an early methicillin-resistant Staphylococcus aureus strain and a biofilm-producing methicillin-resistant Staphylococcus epidermidis strain.</title>
        <authorList>
            <person name="Gill S.R."/>
            <person name="Fouts D.E."/>
            <person name="Archer G.L."/>
            <person name="Mongodin E.F."/>
            <person name="DeBoy R.T."/>
            <person name="Ravel J."/>
            <person name="Paulsen I.T."/>
            <person name="Kolonay J.F."/>
            <person name="Brinkac L.M."/>
            <person name="Beanan M.J."/>
            <person name="Dodson R.J."/>
            <person name="Daugherty S.C."/>
            <person name="Madupu R."/>
            <person name="Angiuoli S.V."/>
            <person name="Durkin A.S."/>
            <person name="Haft D.H."/>
            <person name="Vamathevan J.J."/>
            <person name="Khouri H."/>
            <person name="Utterback T.R."/>
            <person name="Lee C."/>
            <person name="Dimitrov G."/>
            <person name="Jiang L."/>
            <person name="Qin H."/>
            <person name="Weidman J."/>
            <person name="Tran K."/>
            <person name="Kang K.H."/>
            <person name="Hance I.R."/>
            <person name="Nelson K.E."/>
            <person name="Fraser C.M."/>
        </authorList>
    </citation>
    <scope>NUCLEOTIDE SEQUENCE [LARGE SCALE GENOMIC DNA]</scope>
    <source>
        <strain>ATCC 35984 / DSM 28319 / BCRC 17069 / CCUG 31568 / BM 3577 / RP62A</strain>
    </source>
</reference>
<proteinExistence type="inferred from homology"/>
<evidence type="ECO:0000255" key="1">
    <source>
        <dbReference type="HAMAP-Rule" id="MF_00728"/>
    </source>
</evidence>
<name>EZRA_STAEQ</name>
<accession>Q5HNI8</accession>
<feature type="chain" id="PRO_0000172885" description="Septation ring formation regulator EzrA">
    <location>
        <begin position="1"/>
        <end position="564"/>
    </location>
</feature>
<feature type="topological domain" description="Extracellular" evidence="1">
    <location>
        <begin position="1"/>
        <end position="4"/>
    </location>
</feature>
<feature type="transmembrane region" description="Helical" evidence="1">
    <location>
        <begin position="5"/>
        <end position="23"/>
    </location>
</feature>
<feature type="topological domain" description="Cytoplasmic" evidence="1">
    <location>
        <begin position="24"/>
        <end position="564"/>
    </location>
</feature>
<feature type="coiled-coil region" evidence="1">
    <location>
        <begin position="84"/>
        <end position="126"/>
    </location>
</feature>
<feature type="coiled-coil region" evidence="1">
    <location>
        <begin position="165"/>
        <end position="223"/>
    </location>
</feature>
<feature type="coiled-coil region" evidence="1">
    <location>
        <begin position="271"/>
        <end position="303"/>
    </location>
</feature>
<feature type="coiled-coil region" evidence="1">
    <location>
        <begin position="350"/>
        <end position="435"/>
    </location>
</feature>
<organism>
    <name type="scientific">Staphylococcus epidermidis (strain ATCC 35984 / DSM 28319 / BCRC 17069 / CCUG 31568 / BM 3577 / RP62A)</name>
    <dbReference type="NCBI Taxonomy" id="176279"/>
    <lineage>
        <taxon>Bacteria</taxon>
        <taxon>Bacillati</taxon>
        <taxon>Bacillota</taxon>
        <taxon>Bacilli</taxon>
        <taxon>Bacillales</taxon>
        <taxon>Staphylococcaceae</taxon>
        <taxon>Staphylococcus</taxon>
    </lineage>
</organism>
<gene>
    <name evidence="1" type="primary">ezrA</name>
    <name type="ordered locus">SERP1281</name>
</gene>
<comment type="function">
    <text evidence="1">Negative regulator of FtsZ ring formation; modulates the frequency and position of FtsZ ring formation. Inhibits FtsZ ring formation at polar sites. Interacts either with FtsZ or with one of its binding partners to promote depolymerization.</text>
</comment>
<comment type="subcellular location">
    <subcellularLocation>
        <location>Cell membrane</location>
        <topology>Single-pass membrane protein</topology>
    </subcellularLocation>
    <text evidence="1">Colocalized with FtsZ to the nascent septal site.</text>
</comment>
<comment type="similarity">
    <text evidence="1">Belongs to the EzrA family.</text>
</comment>